<dbReference type="EC" id="2.4.1.325" evidence="1"/>
<dbReference type="EMBL" id="AL513382">
    <property type="protein sequence ID" value="CAD09389.1"/>
    <property type="molecule type" value="Genomic_DNA"/>
</dbReference>
<dbReference type="EMBL" id="AE014613">
    <property type="protein sequence ID" value="AAO70894.1"/>
    <property type="molecule type" value="Genomic_DNA"/>
</dbReference>
<dbReference type="RefSeq" id="NP_457820.1">
    <property type="nucleotide sequence ID" value="NC_003198.1"/>
</dbReference>
<dbReference type="RefSeq" id="WP_000217177.1">
    <property type="nucleotide sequence ID" value="NZ_QXGZ01000007.1"/>
</dbReference>
<dbReference type="SMR" id="Q8Z395"/>
<dbReference type="STRING" id="220341.gene:17587484"/>
<dbReference type="KEGG" id="stt:t3370"/>
<dbReference type="KEGG" id="sty:STY3628"/>
<dbReference type="PATRIC" id="fig|220341.7.peg.3697"/>
<dbReference type="eggNOG" id="COG1819">
    <property type="taxonomic scope" value="Bacteria"/>
</dbReference>
<dbReference type="HOGENOM" id="CLU_066584_0_0_6"/>
<dbReference type="OMA" id="VIVPMGY"/>
<dbReference type="OrthoDB" id="6532169at2"/>
<dbReference type="UniPathway" id="UPA00566"/>
<dbReference type="Proteomes" id="UP000000541">
    <property type="component" value="Chromosome"/>
</dbReference>
<dbReference type="Proteomes" id="UP000002670">
    <property type="component" value="Chromosome"/>
</dbReference>
<dbReference type="GO" id="GO:0005886">
    <property type="term" value="C:plasma membrane"/>
    <property type="evidence" value="ECO:0007669"/>
    <property type="project" value="UniProtKB-SubCell"/>
</dbReference>
<dbReference type="GO" id="GO:0102031">
    <property type="term" value="F:4-acetamido-4,6-dideoxy-D-galactose transferase activity"/>
    <property type="evidence" value="ECO:0007669"/>
    <property type="project" value="UniProtKB-EC"/>
</dbReference>
<dbReference type="GO" id="GO:0008417">
    <property type="term" value="F:fucosyltransferase activity"/>
    <property type="evidence" value="ECO:0007669"/>
    <property type="project" value="InterPro"/>
</dbReference>
<dbReference type="GO" id="GO:0009246">
    <property type="term" value="P:enterobacterial common antigen biosynthetic process"/>
    <property type="evidence" value="ECO:0007669"/>
    <property type="project" value="UniProtKB-UniRule"/>
</dbReference>
<dbReference type="GO" id="GO:0036065">
    <property type="term" value="P:fucosylation"/>
    <property type="evidence" value="ECO:0007669"/>
    <property type="project" value="InterPro"/>
</dbReference>
<dbReference type="HAMAP" id="MF_01002">
    <property type="entry name" value="WecF_RffT"/>
    <property type="match status" value="1"/>
</dbReference>
<dbReference type="InterPro" id="IPR009993">
    <property type="entry name" value="WecF"/>
</dbReference>
<dbReference type="NCBIfam" id="NF002753">
    <property type="entry name" value="PRK02797.1-2"/>
    <property type="match status" value="1"/>
</dbReference>
<dbReference type="NCBIfam" id="NF002754">
    <property type="entry name" value="PRK02797.1-3"/>
    <property type="match status" value="1"/>
</dbReference>
<dbReference type="Pfam" id="PF07429">
    <property type="entry name" value="Glyco_transf_56"/>
    <property type="match status" value="1"/>
</dbReference>
<gene>
    <name evidence="1" type="primary">wecF</name>
    <name evidence="1" type="synonym">rffT</name>
    <name type="ordered locus">STY3628</name>
    <name type="ordered locus">t3370</name>
</gene>
<organism>
    <name type="scientific">Salmonella typhi</name>
    <dbReference type="NCBI Taxonomy" id="90370"/>
    <lineage>
        <taxon>Bacteria</taxon>
        <taxon>Pseudomonadati</taxon>
        <taxon>Pseudomonadota</taxon>
        <taxon>Gammaproteobacteria</taxon>
        <taxon>Enterobacterales</taxon>
        <taxon>Enterobacteriaceae</taxon>
        <taxon>Salmonella</taxon>
    </lineage>
</organism>
<name>WECF_SALTI</name>
<proteinExistence type="inferred from homology"/>
<reference key="1">
    <citation type="journal article" date="2001" name="Nature">
        <title>Complete genome sequence of a multiple drug resistant Salmonella enterica serovar Typhi CT18.</title>
        <authorList>
            <person name="Parkhill J."/>
            <person name="Dougan G."/>
            <person name="James K.D."/>
            <person name="Thomson N.R."/>
            <person name="Pickard D."/>
            <person name="Wain J."/>
            <person name="Churcher C.M."/>
            <person name="Mungall K.L."/>
            <person name="Bentley S.D."/>
            <person name="Holden M.T.G."/>
            <person name="Sebaihia M."/>
            <person name="Baker S."/>
            <person name="Basham D."/>
            <person name="Brooks K."/>
            <person name="Chillingworth T."/>
            <person name="Connerton P."/>
            <person name="Cronin A."/>
            <person name="Davis P."/>
            <person name="Davies R.M."/>
            <person name="Dowd L."/>
            <person name="White N."/>
            <person name="Farrar J."/>
            <person name="Feltwell T."/>
            <person name="Hamlin N."/>
            <person name="Haque A."/>
            <person name="Hien T.T."/>
            <person name="Holroyd S."/>
            <person name="Jagels K."/>
            <person name="Krogh A."/>
            <person name="Larsen T.S."/>
            <person name="Leather S."/>
            <person name="Moule S."/>
            <person name="O'Gaora P."/>
            <person name="Parry C."/>
            <person name="Quail M.A."/>
            <person name="Rutherford K.M."/>
            <person name="Simmonds M."/>
            <person name="Skelton J."/>
            <person name="Stevens K."/>
            <person name="Whitehead S."/>
            <person name="Barrell B.G."/>
        </authorList>
    </citation>
    <scope>NUCLEOTIDE SEQUENCE [LARGE SCALE GENOMIC DNA]</scope>
    <source>
        <strain>CT18</strain>
    </source>
</reference>
<reference key="2">
    <citation type="journal article" date="2003" name="J. Bacteriol.">
        <title>Comparative genomics of Salmonella enterica serovar Typhi strains Ty2 and CT18.</title>
        <authorList>
            <person name="Deng W."/>
            <person name="Liou S.-R."/>
            <person name="Plunkett G. III"/>
            <person name="Mayhew G.F."/>
            <person name="Rose D.J."/>
            <person name="Burland V."/>
            <person name="Kodoyianni V."/>
            <person name="Schwartz D.C."/>
            <person name="Blattner F.R."/>
        </authorList>
    </citation>
    <scope>NUCLEOTIDE SEQUENCE [LARGE SCALE GENOMIC DNA]</scope>
    <source>
        <strain>ATCC 700931 / Ty2</strain>
    </source>
</reference>
<accession>Q8Z395</accession>
<protein>
    <recommendedName>
        <fullName evidence="1">TDP-N-acetylfucosamine:lipid II N-acetylfucosaminyltransferase</fullName>
        <ecNumber evidence="1">2.4.1.325</ecNumber>
    </recommendedName>
    <alternativeName>
        <fullName evidence="1">4-alpha-L-fucosyltransferase</fullName>
    </alternativeName>
    <alternativeName>
        <fullName evidence="1">TDP-Fuc4NAc:lipid II Fuc4NAc transferase</fullName>
        <shortName evidence="1">Fuc4NAc transferase</shortName>
    </alternativeName>
</protein>
<feature type="chain" id="PRO_0000216187" description="TDP-N-acetylfucosamine:lipid II N-acetylfucosaminyltransferase">
    <location>
        <begin position="1"/>
        <end position="359"/>
    </location>
</feature>
<evidence type="ECO:0000255" key="1">
    <source>
        <dbReference type="HAMAP-Rule" id="MF_01002"/>
    </source>
</evidence>
<sequence length="359" mass="40400">MTVLIHVLGSDIPHHNHTVLRFFNDTLAATGEHAREFMVAGEDNGFTESCPALSLRFYGSKKALAQAVIAKAKANRRQRFFFHGQFNISLWLALLSGGIKPAQFYWHIWGADLYEVSNGLKFRLFYPLRRIAQGRVGGVFATRGDLSYFARQHPGVRGELLYFPTRMDPSLNAMAKERQRAGKLTILVGNSGDRSNQHIAALRAVYQQFGDTVNVVVPMGYPANNQAYIDEVRQAGLALFSAENLQILSEKMEFDAYLALLRQCDLGYFIFARQQGIGTLCLLIQADIPCVLNRDNPFWQDMAEQHLPVLFTTDDLNEQVVREAQRQLASVDKSGITFFSPNYLQPWHNALRIAAGEAE</sequence>
<keyword id="KW-0997">Cell inner membrane</keyword>
<keyword id="KW-1003">Cell membrane</keyword>
<keyword id="KW-0328">Glycosyltransferase</keyword>
<keyword id="KW-0472">Membrane</keyword>
<keyword id="KW-0808">Transferase</keyword>
<comment type="function">
    <text evidence="1">Catalyzes the synthesis of Und-PP-GlcNAc-ManNAcA-Fuc4NAc (Lipid III), the third lipid-linked intermediate involved in ECA synthesis.</text>
</comment>
<comment type="catalytic activity">
    <reaction evidence="1">
        <text>beta-D-ManNAcA-(1-&gt;4)-alpha-D-GlcNAc-di-trans,octa-cis-undecaprenyl diphosphate + dTDP-4-acetamido-4,6-dideoxy-alpha-D-galactose = alpha-D-FucNAc4-(1-&gt;4)-beta-D-ManNAcA-(1-&gt;4)-D-GlcNAc-undecaprenyl diphosphate + dTDP + H(+)</text>
        <dbReference type="Rhea" id="RHEA:28759"/>
        <dbReference type="ChEBI" id="CHEBI:15378"/>
        <dbReference type="ChEBI" id="CHEBI:58369"/>
        <dbReference type="ChEBI" id="CHEBI:61495"/>
        <dbReference type="ChEBI" id="CHEBI:61496"/>
        <dbReference type="ChEBI" id="CHEBI:68493"/>
        <dbReference type="EC" id="2.4.1.325"/>
    </reaction>
</comment>
<comment type="pathway">
    <text evidence="1">Bacterial outer membrane biogenesis; enterobacterial common antigen biosynthesis.</text>
</comment>
<comment type="subcellular location">
    <subcellularLocation>
        <location evidence="1">Cell inner membrane</location>
        <topology evidence="1">Peripheral membrane protein</topology>
    </subcellularLocation>
</comment>
<comment type="similarity">
    <text evidence="1">Belongs to the glycosyltransferase 56 family.</text>
</comment>